<proteinExistence type="inferred from homology"/>
<name>AMI3_MYCTO</name>
<organism>
    <name type="scientific">Mycobacterium tuberculosis (strain CDC 1551 / Oshkosh)</name>
    <dbReference type="NCBI Taxonomy" id="83331"/>
    <lineage>
        <taxon>Bacteria</taxon>
        <taxon>Bacillati</taxon>
        <taxon>Actinomycetota</taxon>
        <taxon>Actinomycetes</taxon>
        <taxon>Mycobacteriales</taxon>
        <taxon>Mycobacteriaceae</taxon>
        <taxon>Mycobacterium</taxon>
        <taxon>Mycobacterium tuberculosis complex</taxon>
    </lineage>
</organism>
<keyword id="KW-0378">Hydrolase</keyword>
<keyword id="KW-1185">Reference proteome</keyword>
<sequence>MSRVHAFVDDALGDLDAVALADAIRSGRVGRADVVEAAIARAEAVNPALNALAYAAFDVARDAAAMGTGQEAFFSGVPTFIKDNVDVAGQPSMHGTDAWEPYAAVADSEITRVVLGTGLVSLGKTQLSEFGFSAVAEHPRLGPVRNPWNTDYTAGASSSGSGALVAAGVVPIAHANDGGGSIRIPAACNGLVGLKPSRGRLPLEPEYRRLPVGIVANGVLTRTVRDTAAFYREAERLWRNHQLPPVGDVTSPVKQRLRIAVVTRSVLREASPEVRQLTLKLAGLLEELGHRVEHVDHPPAPASFVDDFVLYWGFLALAQVRSGRRTFGRTFDPTRLDELTLGLARHTGRNLHRLPLAIMRLRMLRRRSVRFFGTYDVLLTPTVAEATPQVGYLAPTDYQTVLDRLSSWVVFTPVQNVTGVPAISLPLAQSADGMPVGMMLSADTGREALLLELAYELEEARPWARIHAPNIAE</sequence>
<accession>P9WQ94</accession>
<accession>L0TAY0</accession>
<accession>P63494</accession>
<accession>Q10811</accession>
<comment type="catalytic activity">
    <reaction>
        <text>a monocarboxylic acid amide + H2O = a monocarboxylate + NH4(+)</text>
        <dbReference type="Rhea" id="RHEA:12020"/>
        <dbReference type="ChEBI" id="CHEBI:15377"/>
        <dbReference type="ChEBI" id="CHEBI:28938"/>
        <dbReference type="ChEBI" id="CHEBI:35757"/>
        <dbReference type="ChEBI" id="CHEBI:83628"/>
        <dbReference type="EC" id="3.5.1.4"/>
    </reaction>
</comment>
<comment type="similarity">
    <text evidence="2">Belongs to the amidase family.</text>
</comment>
<gene>
    <name type="primary">amiC</name>
    <name type="ordered locus">MT2956</name>
</gene>
<reference key="1">
    <citation type="journal article" date="2002" name="J. Bacteriol.">
        <title>Whole-genome comparison of Mycobacterium tuberculosis clinical and laboratory strains.</title>
        <authorList>
            <person name="Fleischmann R.D."/>
            <person name="Alland D."/>
            <person name="Eisen J.A."/>
            <person name="Carpenter L."/>
            <person name="White O."/>
            <person name="Peterson J.D."/>
            <person name="DeBoy R.T."/>
            <person name="Dodson R.J."/>
            <person name="Gwinn M.L."/>
            <person name="Haft D.H."/>
            <person name="Hickey E.K."/>
            <person name="Kolonay J.F."/>
            <person name="Nelson W.C."/>
            <person name="Umayam L.A."/>
            <person name="Ermolaeva M.D."/>
            <person name="Salzberg S.L."/>
            <person name="Delcher A."/>
            <person name="Utterback T.R."/>
            <person name="Weidman J.F."/>
            <person name="Khouri H.M."/>
            <person name="Gill J."/>
            <person name="Mikula A."/>
            <person name="Bishai W."/>
            <person name="Jacobs W.R. Jr."/>
            <person name="Venter J.C."/>
            <person name="Fraser C.M."/>
        </authorList>
    </citation>
    <scope>NUCLEOTIDE SEQUENCE [LARGE SCALE GENOMIC DNA]</scope>
    <source>
        <strain>CDC 1551 / Oshkosh</strain>
    </source>
</reference>
<dbReference type="EC" id="3.5.1.4"/>
<dbReference type="EMBL" id="AE000516">
    <property type="protein sequence ID" value="AAK47281.1"/>
    <property type="molecule type" value="Genomic_DNA"/>
</dbReference>
<dbReference type="PIR" id="C70925">
    <property type="entry name" value="C70925"/>
</dbReference>
<dbReference type="RefSeq" id="WP_003414672.1">
    <property type="nucleotide sequence ID" value="NZ_KK341227.1"/>
</dbReference>
<dbReference type="SMR" id="P9WQ94"/>
<dbReference type="KEGG" id="mtc:MT2956"/>
<dbReference type="PATRIC" id="fig|83331.31.peg.3193"/>
<dbReference type="HOGENOM" id="CLU_009600_0_4_11"/>
<dbReference type="Proteomes" id="UP000001020">
    <property type="component" value="Chromosome"/>
</dbReference>
<dbReference type="GO" id="GO:0004040">
    <property type="term" value="F:amidase activity"/>
    <property type="evidence" value="ECO:0007669"/>
    <property type="project" value="UniProtKB-EC"/>
</dbReference>
<dbReference type="FunFam" id="3.90.1300.10:FF:000008">
    <property type="entry name" value="Amidase AmiC"/>
    <property type="match status" value="1"/>
</dbReference>
<dbReference type="Gene3D" id="3.90.1300.10">
    <property type="entry name" value="Amidase signature (AS) domain"/>
    <property type="match status" value="1"/>
</dbReference>
<dbReference type="InterPro" id="IPR000120">
    <property type="entry name" value="Amidase"/>
</dbReference>
<dbReference type="InterPro" id="IPR020556">
    <property type="entry name" value="Amidase_CS"/>
</dbReference>
<dbReference type="InterPro" id="IPR023631">
    <property type="entry name" value="Amidase_dom"/>
</dbReference>
<dbReference type="InterPro" id="IPR036928">
    <property type="entry name" value="AS_sf"/>
</dbReference>
<dbReference type="NCBIfam" id="NF005899">
    <property type="entry name" value="PRK07869.1"/>
    <property type="match status" value="1"/>
</dbReference>
<dbReference type="PANTHER" id="PTHR11895:SF7">
    <property type="entry name" value="GLUTAMYL-TRNA(GLN) AMIDOTRANSFERASE SUBUNIT A, MITOCHONDRIAL"/>
    <property type="match status" value="1"/>
</dbReference>
<dbReference type="PANTHER" id="PTHR11895">
    <property type="entry name" value="TRANSAMIDASE"/>
    <property type="match status" value="1"/>
</dbReference>
<dbReference type="Pfam" id="PF01425">
    <property type="entry name" value="Amidase"/>
    <property type="match status" value="1"/>
</dbReference>
<dbReference type="SUPFAM" id="SSF75304">
    <property type="entry name" value="Amidase signature (AS) enzymes"/>
    <property type="match status" value="1"/>
</dbReference>
<dbReference type="PROSITE" id="PS00571">
    <property type="entry name" value="AMIDASES"/>
    <property type="match status" value="1"/>
</dbReference>
<protein>
    <recommendedName>
        <fullName>Putative amidase AmiC</fullName>
        <ecNumber>3.5.1.4</ecNumber>
    </recommendedName>
</protein>
<evidence type="ECO:0000250" key="1"/>
<evidence type="ECO:0000305" key="2"/>
<feature type="chain" id="PRO_0000426815" description="Putative amidase AmiC">
    <location>
        <begin position="1"/>
        <end position="473"/>
    </location>
</feature>
<feature type="active site" description="Charge relay system" evidence="1">
    <location>
        <position position="82"/>
    </location>
</feature>
<feature type="active site" description="Charge relay system" evidence="1">
    <location>
        <position position="157"/>
    </location>
</feature>
<feature type="active site" description="Acyl-ester intermediate" evidence="1">
    <location>
        <position position="181"/>
    </location>
</feature>